<comment type="function">
    <text evidence="1">Catalyzes a salvage reaction resulting in the formation of AMP, that is energically less costly than de novo synthesis.</text>
</comment>
<comment type="catalytic activity">
    <reaction evidence="1">
        <text>AMP + diphosphate = 5-phospho-alpha-D-ribose 1-diphosphate + adenine</text>
        <dbReference type="Rhea" id="RHEA:16609"/>
        <dbReference type="ChEBI" id="CHEBI:16708"/>
        <dbReference type="ChEBI" id="CHEBI:33019"/>
        <dbReference type="ChEBI" id="CHEBI:58017"/>
        <dbReference type="ChEBI" id="CHEBI:456215"/>
        <dbReference type="EC" id="2.4.2.7"/>
    </reaction>
</comment>
<comment type="pathway">
    <text evidence="1">Purine metabolism; AMP biosynthesis via salvage pathway; AMP from adenine: step 1/1.</text>
</comment>
<comment type="subunit">
    <text evidence="1">Homodimer.</text>
</comment>
<comment type="subcellular location">
    <subcellularLocation>
        <location evidence="1">Cytoplasm</location>
    </subcellularLocation>
</comment>
<comment type="similarity">
    <text evidence="1">Belongs to the purine/pyrimidine phosphoribosyltransferase family.</text>
</comment>
<feature type="chain" id="PRO_0000149430" description="Adenine phosphoribosyltransferase">
    <location>
        <begin position="1"/>
        <end position="172"/>
    </location>
</feature>
<gene>
    <name evidence="1" type="primary">apt</name>
    <name type="ordered locus">Pro_1445</name>
</gene>
<proteinExistence type="inferred from homology"/>
<reference key="1">
    <citation type="journal article" date="2003" name="Proc. Natl. Acad. Sci. U.S.A.">
        <title>Genome sequence of the cyanobacterium Prochlorococcus marinus SS120, a nearly minimal oxyphototrophic genome.</title>
        <authorList>
            <person name="Dufresne A."/>
            <person name="Salanoubat M."/>
            <person name="Partensky F."/>
            <person name="Artiguenave F."/>
            <person name="Axmann I.M."/>
            <person name="Barbe V."/>
            <person name="Duprat S."/>
            <person name="Galperin M.Y."/>
            <person name="Koonin E.V."/>
            <person name="Le Gall F."/>
            <person name="Makarova K.S."/>
            <person name="Ostrowski M."/>
            <person name="Oztas S."/>
            <person name="Robert C."/>
            <person name="Rogozin I.B."/>
            <person name="Scanlan D.J."/>
            <person name="Tandeau de Marsac N."/>
            <person name="Weissenbach J."/>
            <person name="Wincker P."/>
            <person name="Wolf Y.I."/>
            <person name="Hess W.R."/>
        </authorList>
    </citation>
    <scope>NUCLEOTIDE SEQUENCE [LARGE SCALE GENOMIC DNA]</scope>
    <source>
        <strain>SARG / CCMP1375 / SS120</strain>
    </source>
</reference>
<protein>
    <recommendedName>
        <fullName evidence="1">Adenine phosphoribosyltransferase</fullName>
        <shortName evidence="1">APRT</shortName>
        <ecNumber evidence="1">2.4.2.7</ecNumber>
    </recommendedName>
</protein>
<evidence type="ECO:0000255" key="1">
    <source>
        <dbReference type="HAMAP-Rule" id="MF_00004"/>
    </source>
</evidence>
<organism>
    <name type="scientific">Prochlorococcus marinus (strain SARG / CCMP1375 / SS120)</name>
    <dbReference type="NCBI Taxonomy" id="167539"/>
    <lineage>
        <taxon>Bacteria</taxon>
        <taxon>Bacillati</taxon>
        <taxon>Cyanobacteriota</taxon>
        <taxon>Cyanophyceae</taxon>
        <taxon>Synechococcales</taxon>
        <taxon>Prochlorococcaceae</taxon>
        <taxon>Prochlorococcus</taxon>
    </lineage>
</organism>
<sequence>MIGSKLKEAIRSYSDFPKKGILFHDISPIFCKPDLYQELIEEMAKSEILNSSDAIISIDARGFLFGSCISLKLSKPLILARKAGKLPGPILSSTYNLEYGENSLSIQKESLNEFKNFAIIDDVLATGGTINCVKSLLTSHNKNISGACVVIELLALKAREKLDFPIYSTLTL</sequence>
<keyword id="KW-0963">Cytoplasm</keyword>
<keyword id="KW-0328">Glycosyltransferase</keyword>
<keyword id="KW-0660">Purine salvage</keyword>
<keyword id="KW-1185">Reference proteome</keyword>
<keyword id="KW-0808">Transferase</keyword>
<name>APT_PROMA</name>
<dbReference type="EC" id="2.4.2.7" evidence="1"/>
<dbReference type="EMBL" id="AE017126">
    <property type="protein sequence ID" value="AAQ00489.1"/>
    <property type="molecule type" value="Genomic_DNA"/>
</dbReference>
<dbReference type="RefSeq" id="NP_875836.1">
    <property type="nucleotide sequence ID" value="NC_005042.1"/>
</dbReference>
<dbReference type="RefSeq" id="WP_011125596.1">
    <property type="nucleotide sequence ID" value="NC_005042.1"/>
</dbReference>
<dbReference type="SMR" id="Q7VAL5"/>
<dbReference type="STRING" id="167539.Pro_1445"/>
<dbReference type="EnsemblBacteria" id="AAQ00489">
    <property type="protein sequence ID" value="AAQ00489"/>
    <property type="gene ID" value="Pro_1445"/>
</dbReference>
<dbReference type="KEGG" id="pma:Pro_1445"/>
<dbReference type="PATRIC" id="fig|167539.5.peg.1513"/>
<dbReference type="eggNOG" id="COG0503">
    <property type="taxonomic scope" value="Bacteria"/>
</dbReference>
<dbReference type="HOGENOM" id="CLU_063339_3_3_3"/>
<dbReference type="OrthoDB" id="9803963at2"/>
<dbReference type="UniPathway" id="UPA00588">
    <property type="reaction ID" value="UER00646"/>
</dbReference>
<dbReference type="Proteomes" id="UP000001420">
    <property type="component" value="Chromosome"/>
</dbReference>
<dbReference type="GO" id="GO:0005737">
    <property type="term" value="C:cytoplasm"/>
    <property type="evidence" value="ECO:0007669"/>
    <property type="project" value="UniProtKB-SubCell"/>
</dbReference>
<dbReference type="GO" id="GO:0002055">
    <property type="term" value="F:adenine binding"/>
    <property type="evidence" value="ECO:0007669"/>
    <property type="project" value="TreeGrafter"/>
</dbReference>
<dbReference type="GO" id="GO:0003999">
    <property type="term" value="F:adenine phosphoribosyltransferase activity"/>
    <property type="evidence" value="ECO:0007669"/>
    <property type="project" value="UniProtKB-UniRule"/>
</dbReference>
<dbReference type="GO" id="GO:0016208">
    <property type="term" value="F:AMP binding"/>
    <property type="evidence" value="ECO:0007669"/>
    <property type="project" value="TreeGrafter"/>
</dbReference>
<dbReference type="GO" id="GO:0006168">
    <property type="term" value="P:adenine salvage"/>
    <property type="evidence" value="ECO:0007669"/>
    <property type="project" value="InterPro"/>
</dbReference>
<dbReference type="GO" id="GO:0044209">
    <property type="term" value="P:AMP salvage"/>
    <property type="evidence" value="ECO:0007669"/>
    <property type="project" value="UniProtKB-UniRule"/>
</dbReference>
<dbReference type="GO" id="GO:0006166">
    <property type="term" value="P:purine ribonucleoside salvage"/>
    <property type="evidence" value="ECO:0007669"/>
    <property type="project" value="UniProtKB-KW"/>
</dbReference>
<dbReference type="CDD" id="cd06223">
    <property type="entry name" value="PRTases_typeI"/>
    <property type="match status" value="1"/>
</dbReference>
<dbReference type="FunFam" id="3.40.50.2020:FF:000004">
    <property type="entry name" value="Adenine phosphoribosyltransferase"/>
    <property type="match status" value="1"/>
</dbReference>
<dbReference type="Gene3D" id="3.40.50.2020">
    <property type="match status" value="1"/>
</dbReference>
<dbReference type="HAMAP" id="MF_00004">
    <property type="entry name" value="Aden_phosphoribosyltr"/>
    <property type="match status" value="1"/>
</dbReference>
<dbReference type="InterPro" id="IPR005764">
    <property type="entry name" value="Ade_phspho_trans"/>
</dbReference>
<dbReference type="InterPro" id="IPR000836">
    <property type="entry name" value="PRibTrfase_dom"/>
</dbReference>
<dbReference type="InterPro" id="IPR029057">
    <property type="entry name" value="PRTase-like"/>
</dbReference>
<dbReference type="InterPro" id="IPR050054">
    <property type="entry name" value="UPRTase/APRTase"/>
</dbReference>
<dbReference type="NCBIfam" id="NF002636">
    <property type="entry name" value="PRK02304.1-5"/>
    <property type="match status" value="1"/>
</dbReference>
<dbReference type="PANTHER" id="PTHR32315">
    <property type="entry name" value="ADENINE PHOSPHORIBOSYLTRANSFERASE"/>
    <property type="match status" value="1"/>
</dbReference>
<dbReference type="PANTHER" id="PTHR32315:SF3">
    <property type="entry name" value="ADENINE PHOSPHORIBOSYLTRANSFERASE"/>
    <property type="match status" value="1"/>
</dbReference>
<dbReference type="Pfam" id="PF00156">
    <property type="entry name" value="Pribosyltran"/>
    <property type="match status" value="1"/>
</dbReference>
<dbReference type="SUPFAM" id="SSF53271">
    <property type="entry name" value="PRTase-like"/>
    <property type="match status" value="1"/>
</dbReference>
<accession>Q7VAL5</accession>